<accession>B5XWP9</accession>
<comment type="function">
    <text evidence="1">Part of a membrane-bound complex that couples electron transfer with translocation of ions across the membrane.</text>
</comment>
<comment type="cofactor">
    <cofactor evidence="1">
        <name>[4Fe-4S] cluster</name>
        <dbReference type="ChEBI" id="CHEBI:49883"/>
    </cofactor>
    <text evidence="1">Binds 2 [4Fe-4S] clusters per subunit.</text>
</comment>
<comment type="subunit">
    <text evidence="1">The complex is composed of six subunits: RnfA, RnfB, RnfC, RnfD, RnfE and RnfG.</text>
</comment>
<comment type="subcellular location">
    <subcellularLocation>
        <location evidence="1">Cell inner membrane</location>
        <topology evidence="1">Peripheral membrane protein</topology>
    </subcellularLocation>
</comment>
<comment type="similarity">
    <text evidence="1">Belongs to the 4Fe4S bacterial-type ferredoxin family. RnfC subfamily.</text>
</comment>
<reference key="1">
    <citation type="journal article" date="2008" name="PLoS Genet.">
        <title>Complete genome sequence of the N2-fixing broad host range endophyte Klebsiella pneumoniae 342 and virulence predictions verified in mice.</title>
        <authorList>
            <person name="Fouts D.E."/>
            <person name="Tyler H.L."/>
            <person name="DeBoy R.T."/>
            <person name="Daugherty S."/>
            <person name="Ren Q."/>
            <person name="Badger J.H."/>
            <person name="Durkin A.S."/>
            <person name="Huot H."/>
            <person name="Shrivastava S."/>
            <person name="Kothari S."/>
            <person name="Dodson R.J."/>
            <person name="Mohamoud Y."/>
            <person name="Khouri H."/>
            <person name="Roesch L.F.W."/>
            <person name="Krogfelt K.A."/>
            <person name="Struve C."/>
            <person name="Triplett E.W."/>
            <person name="Methe B.A."/>
        </authorList>
    </citation>
    <scope>NUCLEOTIDE SEQUENCE [LARGE SCALE GENOMIC DNA]</scope>
    <source>
        <strain>342</strain>
    </source>
</reference>
<keyword id="KW-0004">4Fe-4S</keyword>
<keyword id="KW-0997">Cell inner membrane</keyword>
<keyword id="KW-1003">Cell membrane</keyword>
<keyword id="KW-0249">Electron transport</keyword>
<keyword id="KW-0408">Iron</keyword>
<keyword id="KW-0411">Iron-sulfur</keyword>
<keyword id="KW-0472">Membrane</keyword>
<keyword id="KW-0479">Metal-binding</keyword>
<keyword id="KW-0677">Repeat</keyword>
<keyword id="KW-1278">Translocase</keyword>
<keyword id="KW-0813">Transport</keyword>
<name>RNFC_KLEP3</name>
<feature type="chain" id="PRO_1000194519" description="Ion-translocating oxidoreductase complex subunit C">
    <location>
        <begin position="1"/>
        <end position="753"/>
    </location>
</feature>
<feature type="domain" description="4Fe-4S ferredoxin-type 1" evidence="1">
    <location>
        <begin position="367"/>
        <end position="397"/>
    </location>
</feature>
<feature type="domain" description="4Fe-4S ferredoxin-type 2" evidence="1">
    <location>
        <begin position="407"/>
        <end position="436"/>
    </location>
</feature>
<feature type="region of interest" description="Disordered" evidence="2">
    <location>
        <begin position="517"/>
        <end position="561"/>
    </location>
</feature>
<feature type="region of interest" description="Disordered" evidence="2">
    <location>
        <begin position="606"/>
        <end position="625"/>
    </location>
</feature>
<feature type="region of interest" description="Disordered" evidence="2">
    <location>
        <begin position="640"/>
        <end position="659"/>
    </location>
</feature>
<feature type="region of interest" description="Disordered" evidence="2">
    <location>
        <begin position="705"/>
        <end position="735"/>
    </location>
</feature>
<feature type="compositionally biased region" description="Basic and acidic residues" evidence="2">
    <location>
        <begin position="526"/>
        <end position="537"/>
    </location>
</feature>
<feature type="compositionally biased region" description="Low complexity" evidence="2">
    <location>
        <begin position="610"/>
        <end position="622"/>
    </location>
</feature>
<feature type="compositionally biased region" description="Low complexity" evidence="2">
    <location>
        <begin position="644"/>
        <end position="656"/>
    </location>
</feature>
<feature type="compositionally biased region" description="Low complexity" evidence="2">
    <location>
        <begin position="712"/>
        <end position="735"/>
    </location>
</feature>
<feature type="binding site" evidence="1">
    <location>
        <position position="377"/>
    </location>
    <ligand>
        <name>[4Fe-4S] cluster</name>
        <dbReference type="ChEBI" id="CHEBI:49883"/>
        <label>1</label>
    </ligand>
</feature>
<feature type="binding site" evidence="1">
    <location>
        <position position="380"/>
    </location>
    <ligand>
        <name>[4Fe-4S] cluster</name>
        <dbReference type="ChEBI" id="CHEBI:49883"/>
        <label>1</label>
    </ligand>
</feature>
<feature type="binding site" evidence="1">
    <location>
        <position position="383"/>
    </location>
    <ligand>
        <name>[4Fe-4S] cluster</name>
        <dbReference type="ChEBI" id="CHEBI:49883"/>
        <label>1</label>
    </ligand>
</feature>
<feature type="binding site" evidence="1">
    <location>
        <position position="387"/>
    </location>
    <ligand>
        <name>[4Fe-4S] cluster</name>
        <dbReference type="ChEBI" id="CHEBI:49883"/>
        <label>2</label>
    </ligand>
</feature>
<feature type="binding site" evidence="1">
    <location>
        <position position="416"/>
    </location>
    <ligand>
        <name>[4Fe-4S] cluster</name>
        <dbReference type="ChEBI" id="CHEBI:49883"/>
        <label>2</label>
    </ligand>
</feature>
<feature type="binding site" evidence="1">
    <location>
        <position position="419"/>
    </location>
    <ligand>
        <name>[4Fe-4S] cluster</name>
        <dbReference type="ChEBI" id="CHEBI:49883"/>
        <label>2</label>
    </ligand>
</feature>
<feature type="binding site" evidence="1">
    <location>
        <position position="422"/>
    </location>
    <ligand>
        <name>[4Fe-4S] cluster</name>
        <dbReference type="ChEBI" id="CHEBI:49883"/>
        <label>2</label>
    </ligand>
</feature>
<feature type="binding site" evidence="1">
    <location>
        <position position="426"/>
    </location>
    <ligand>
        <name>[4Fe-4S] cluster</name>
        <dbReference type="ChEBI" id="CHEBI:49883"/>
        <label>1</label>
    </ligand>
</feature>
<gene>
    <name evidence="1" type="primary">rnfC</name>
    <name type="ordered locus">KPK_2382</name>
</gene>
<sequence length="753" mass="80438">MFKLFSAFRKDKVWDFNGGIHPPEMKTQSNGTPLRQVSLPQRLIIPLKQHIGAEGELCVKVGDRVLRGQPLTRGWGRMLPVHAPTSGTVTAIAPHTTAHPSGLAEMSVIIDADGEDRWIERDGWSDYQLRTREALIERIHQFGVAGLGGAGFPTGSKLRGGSDKIKTLIINAAECEPYITADDRLMQDCAAQIVDGIRILAHILQPDEVLIGIEDNKPQAISMLRAVLCDAHGISLRVIPTKYPSGGAKQLTQILTGKQVPHGGRSSDIGVLMQNVGTAYAIKRAVIDGEPLTERVVTLTGEAVSRPGNVWARLGTPVRHLLNDAGFCASAEPMVIMGGPLMGFTLPGLDVPVVKITNCLLAPSASEMGEPQEEKGCIRCSACADACPADLLPQQLYWFSKGQQHDKATAHNLADCIECGACAWVCPSNIPLVQYFRQEKAEISAIRQEEQRAAEAKARFEARQARLEREKAARAERHKKAAVQPAAKDQDAINAALARVRDKQRDAAQPIVIQSGAKPDNSEAIAAREARKAEARARKAQQQAASVETPSTDAADPRKAAVEAAIARAKARKAEQQAAPVEAPVAEPVDPRKAAVEAAIARAKARKAEQQVAPVEAPVAEPVDPRKAAVEAAIARAKARKAEQQVAPVEAPVAEPVDPRKAAVEAAIARAKARKAEQQAAPVEAPVAEPVDPRKAAVEAAIARAKARKAEQQAAQPDLASAAANDDPRKAAVAAAIARVQARKATQQAVNEE</sequence>
<evidence type="ECO:0000255" key="1">
    <source>
        <dbReference type="HAMAP-Rule" id="MF_00461"/>
    </source>
</evidence>
<evidence type="ECO:0000256" key="2">
    <source>
        <dbReference type="SAM" id="MobiDB-lite"/>
    </source>
</evidence>
<dbReference type="EC" id="7.-.-.-" evidence="1"/>
<dbReference type="EMBL" id="CP000964">
    <property type="protein sequence ID" value="ACI06796.1"/>
    <property type="molecule type" value="Genomic_DNA"/>
</dbReference>
<dbReference type="SMR" id="B5XWP9"/>
<dbReference type="KEGG" id="kpe:KPK_2382"/>
<dbReference type="HOGENOM" id="CLU_010808_2_1_6"/>
<dbReference type="Proteomes" id="UP000001734">
    <property type="component" value="Chromosome"/>
</dbReference>
<dbReference type="GO" id="GO:0005886">
    <property type="term" value="C:plasma membrane"/>
    <property type="evidence" value="ECO:0007669"/>
    <property type="project" value="UniProtKB-SubCell"/>
</dbReference>
<dbReference type="GO" id="GO:0051539">
    <property type="term" value="F:4 iron, 4 sulfur cluster binding"/>
    <property type="evidence" value="ECO:0007669"/>
    <property type="project" value="UniProtKB-KW"/>
</dbReference>
<dbReference type="GO" id="GO:0009055">
    <property type="term" value="F:electron transfer activity"/>
    <property type="evidence" value="ECO:0007669"/>
    <property type="project" value="InterPro"/>
</dbReference>
<dbReference type="GO" id="GO:0046872">
    <property type="term" value="F:metal ion binding"/>
    <property type="evidence" value="ECO:0007669"/>
    <property type="project" value="UniProtKB-KW"/>
</dbReference>
<dbReference type="GO" id="GO:0022900">
    <property type="term" value="P:electron transport chain"/>
    <property type="evidence" value="ECO:0007669"/>
    <property type="project" value="UniProtKB-UniRule"/>
</dbReference>
<dbReference type="Gene3D" id="3.30.70.20">
    <property type="match status" value="1"/>
</dbReference>
<dbReference type="Gene3D" id="3.40.50.11540">
    <property type="entry name" value="NADH-ubiquinone oxidoreductase 51kDa subunit"/>
    <property type="match status" value="1"/>
</dbReference>
<dbReference type="HAMAP" id="MF_00461">
    <property type="entry name" value="RsxC_RnfC"/>
    <property type="match status" value="1"/>
</dbReference>
<dbReference type="InterPro" id="IPR017896">
    <property type="entry name" value="4Fe4S_Fe-S-bd"/>
</dbReference>
<dbReference type="InterPro" id="IPR017900">
    <property type="entry name" value="4Fe4S_Fe_S_CS"/>
</dbReference>
<dbReference type="InterPro" id="IPR010208">
    <property type="entry name" value="Ion_transpt_RnfC/RsxC"/>
</dbReference>
<dbReference type="InterPro" id="IPR011538">
    <property type="entry name" value="Nuo51_FMN-bd"/>
</dbReference>
<dbReference type="InterPro" id="IPR037225">
    <property type="entry name" value="Nuo51_FMN-bd_sf"/>
</dbReference>
<dbReference type="InterPro" id="IPR026902">
    <property type="entry name" value="RnfC_N"/>
</dbReference>
<dbReference type="InterPro" id="IPR019554">
    <property type="entry name" value="Soluble_ligand-bd"/>
</dbReference>
<dbReference type="NCBIfam" id="NF003454">
    <property type="entry name" value="PRK05035.1"/>
    <property type="match status" value="1"/>
</dbReference>
<dbReference type="NCBIfam" id="TIGR01945">
    <property type="entry name" value="rnfC"/>
    <property type="match status" value="1"/>
</dbReference>
<dbReference type="PANTHER" id="PTHR43034">
    <property type="entry name" value="ION-TRANSLOCATING OXIDOREDUCTASE COMPLEX SUBUNIT C"/>
    <property type="match status" value="1"/>
</dbReference>
<dbReference type="PANTHER" id="PTHR43034:SF2">
    <property type="entry name" value="ION-TRANSLOCATING OXIDOREDUCTASE COMPLEX SUBUNIT C"/>
    <property type="match status" value="1"/>
</dbReference>
<dbReference type="Pfam" id="PF01512">
    <property type="entry name" value="Complex1_51K"/>
    <property type="match status" value="1"/>
</dbReference>
<dbReference type="Pfam" id="PF12838">
    <property type="entry name" value="Fer4_7"/>
    <property type="match status" value="1"/>
</dbReference>
<dbReference type="Pfam" id="PF13375">
    <property type="entry name" value="RnfC_N"/>
    <property type="match status" value="1"/>
</dbReference>
<dbReference type="Pfam" id="PF10531">
    <property type="entry name" value="SLBB"/>
    <property type="match status" value="1"/>
</dbReference>
<dbReference type="SUPFAM" id="SSF46548">
    <property type="entry name" value="alpha-helical ferredoxin"/>
    <property type="match status" value="1"/>
</dbReference>
<dbReference type="SUPFAM" id="SSF142019">
    <property type="entry name" value="Nqo1 FMN-binding domain-like"/>
    <property type="match status" value="1"/>
</dbReference>
<dbReference type="PROSITE" id="PS00198">
    <property type="entry name" value="4FE4S_FER_1"/>
    <property type="match status" value="2"/>
</dbReference>
<dbReference type="PROSITE" id="PS51379">
    <property type="entry name" value="4FE4S_FER_2"/>
    <property type="match status" value="2"/>
</dbReference>
<proteinExistence type="inferred from homology"/>
<protein>
    <recommendedName>
        <fullName evidence="1">Ion-translocating oxidoreductase complex subunit C</fullName>
        <ecNumber evidence="1">7.-.-.-</ecNumber>
    </recommendedName>
    <alternativeName>
        <fullName evidence="1">Rnf electron transport complex subunit C</fullName>
    </alternativeName>
</protein>
<organism>
    <name type="scientific">Klebsiella pneumoniae (strain 342)</name>
    <dbReference type="NCBI Taxonomy" id="507522"/>
    <lineage>
        <taxon>Bacteria</taxon>
        <taxon>Pseudomonadati</taxon>
        <taxon>Pseudomonadota</taxon>
        <taxon>Gammaproteobacteria</taxon>
        <taxon>Enterobacterales</taxon>
        <taxon>Enterobacteriaceae</taxon>
        <taxon>Klebsiella/Raoultella group</taxon>
        <taxon>Klebsiella</taxon>
        <taxon>Klebsiella pneumoniae complex</taxon>
    </lineage>
</organism>